<feature type="chain" id="PRO_0000220636" description="JNK-interacting protein 3">
    <location>
        <begin position="1"/>
        <end position="1227"/>
    </location>
</feature>
<feature type="domain" description="RH1" evidence="3">
    <location>
        <begin position="25"/>
        <end position="113"/>
    </location>
</feature>
<feature type="domain" description="RH2" evidence="4">
    <location>
        <begin position="453"/>
        <end position="524"/>
    </location>
</feature>
<feature type="region of interest" description="Disordered" evidence="5">
    <location>
        <begin position="1"/>
        <end position="22"/>
    </location>
</feature>
<feature type="region of interest" description="Disordered" evidence="5">
    <location>
        <begin position="281"/>
        <end position="323"/>
    </location>
</feature>
<feature type="region of interest" description="Disordered" evidence="5">
    <location>
        <begin position="517"/>
        <end position="572"/>
    </location>
</feature>
<feature type="region of interest" description="Disordered" evidence="5">
    <location>
        <begin position="804"/>
        <end position="851"/>
    </location>
</feature>
<feature type="region of interest" description="Disordered" evidence="5">
    <location>
        <begin position="863"/>
        <end position="889"/>
    </location>
</feature>
<feature type="coiled-coil region" evidence="2">
    <location>
        <begin position="84"/>
        <end position="191"/>
    </location>
</feature>
<feature type="coiled-coil region" evidence="2">
    <location>
        <begin position="363"/>
        <end position="489"/>
    </location>
</feature>
<feature type="coiled-coil region" evidence="2">
    <location>
        <begin position="814"/>
        <end position="849"/>
    </location>
</feature>
<feature type="compositionally biased region" description="Low complexity" evidence="5">
    <location>
        <begin position="290"/>
        <end position="308"/>
    </location>
</feature>
<feature type="compositionally biased region" description="Gly residues" evidence="5">
    <location>
        <begin position="526"/>
        <end position="540"/>
    </location>
</feature>
<feature type="compositionally biased region" description="Low complexity" evidence="5">
    <location>
        <begin position="541"/>
        <end position="550"/>
    </location>
</feature>
<feature type="compositionally biased region" description="Basic and acidic residues" evidence="5">
    <location>
        <begin position="807"/>
        <end position="817"/>
    </location>
</feature>
<feature type="compositionally biased region" description="Low complexity" evidence="5">
    <location>
        <begin position="879"/>
        <end position="889"/>
    </location>
</feature>
<feature type="splice variant" id="VSP_002780" description="In isoform B." evidence="7">
    <original>MMDNDDALLNNGGPQSGAETVYGTEDNNMVMSEK</original>
    <variation>M</variation>
    <location>
        <begin position="1"/>
        <end position="34"/>
    </location>
</feature>
<feature type="sequence variant" description="In RNA edited version.">
    <original>S</original>
    <variation>G</variation>
    <location>
        <position position="983"/>
    </location>
</feature>
<feature type="sequence conflict" description="In Ref. 4; AAN71473." evidence="8" ref="4">
    <location>
        <begin position="355"/>
        <end position="360"/>
    </location>
</feature>
<feature type="sequence conflict" description="In Ref. 4; AAN71473." evidence="8" ref="4">
    <original>M</original>
    <variation>I</variation>
    <location>
        <position position="792"/>
    </location>
</feature>
<feature type="sequence conflict" description="In Ref. 4; AAN71473." evidence="8" ref="4">
    <original>K</original>
    <variation>R</variation>
    <location>
        <position position="1124"/>
    </location>
</feature>
<name>JIP3_DROME</name>
<accession>Q9GQF1</accession>
<accession>Q5U182</accession>
<accession>Q8IGL6</accession>
<accession>Q95SK0</accession>
<accession>Q9VSC0</accession>
<gene>
    <name type="primary">syd</name>
    <name type="ORF">CG8110</name>
</gene>
<protein>
    <recommendedName>
        <fullName>JNK-interacting protein 3</fullName>
    </recommendedName>
    <alternativeName>
        <fullName>Protein sunday driver</fullName>
    </alternativeName>
</protein>
<dbReference type="EMBL" id="AF262045">
    <property type="protein sequence ID" value="AAG36930.1"/>
    <property type="molecule type" value="mRNA"/>
</dbReference>
<dbReference type="EMBL" id="AE014296">
    <property type="protein sequence ID" value="AAF50505.2"/>
    <property type="molecule type" value="Genomic_DNA"/>
</dbReference>
<dbReference type="EMBL" id="AE014296">
    <property type="protein sequence ID" value="AAN12032.2"/>
    <property type="molecule type" value="Genomic_DNA"/>
</dbReference>
<dbReference type="EMBL" id="AY060748">
    <property type="protein sequence ID" value="AAL28296.1"/>
    <property type="status" value="ALT_INIT"/>
    <property type="molecule type" value="mRNA"/>
</dbReference>
<dbReference type="EMBL" id="BT001718">
    <property type="protein sequence ID" value="AAN71473.1"/>
    <property type="status" value="ALT_SEQ"/>
    <property type="molecule type" value="mRNA"/>
</dbReference>
<dbReference type="EMBL" id="BT016010">
    <property type="protein sequence ID" value="AAV36895.1"/>
    <property type="status" value="ALT_SEQ"/>
    <property type="molecule type" value="mRNA"/>
</dbReference>
<dbReference type="RefSeq" id="NP_524652.1">
    <molecule id="Q9GQF1-1"/>
    <property type="nucleotide sequence ID" value="NM_079913.3"/>
</dbReference>
<dbReference type="RefSeq" id="NP_729311.2">
    <molecule id="Q9GQF1-2"/>
    <property type="nucleotide sequence ID" value="NM_168245.3"/>
</dbReference>
<dbReference type="SMR" id="Q9GQF1"/>
<dbReference type="BioGRID" id="68706">
    <property type="interactions" value="1"/>
</dbReference>
<dbReference type="FunCoup" id="Q9GQF1">
    <property type="interactions" value="1443"/>
</dbReference>
<dbReference type="IntAct" id="Q9GQF1">
    <property type="interactions" value="4"/>
</dbReference>
<dbReference type="STRING" id="7227.FBpp0076483"/>
<dbReference type="GlyGen" id="Q9GQF1">
    <property type="glycosylation" value="1 site"/>
</dbReference>
<dbReference type="PaxDb" id="7227-FBpp0076483"/>
<dbReference type="EnsemblMetazoa" id="FBtr0076768">
    <molecule id="Q9GQF1-1"/>
    <property type="protein sequence ID" value="FBpp0076483"/>
    <property type="gene ID" value="FBgn0024187"/>
</dbReference>
<dbReference type="EnsemblMetazoa" id="FBtr0076769">
    <molecule id="Q9GQF1-2"/>
    <property type="protein sequence ID" value="FBpp0076484"/>
    <property type="gene ID" value="FBgn0024187"/>
</dbReference>
<dbReference type="GeneID" id="43905"/>
<dbReference type="KEGG" id="dme:Dmel_CG8110"/>
<dbReference type="AGR" id="FB:FBgn0024187"/>
<dbReference type="CTD" id="43905"/>
<dbReference type="FlyBase" id="FBgn0024187">
    <property type="gene designation" value="syd"/>
</dbReference>
<dbReference type="VEuPathDB" id="VectorBase:FBgn0024187"/>
<dbReference type="eggNOG" id="KOG2077">
    <property type="taxonomic scope" value="Eukaryota"/>
</dbReference>
<dbReference type="GeneTree" id="ENSGT00940000153496"/>
<dbReference type="InParanoid" id="Q9GQF1"/>
<dbReference type="OMA" id="WEVDAEL"/>
<dbReference type="OrthoDB" id="10256043at2759"/>
<dbReference type="PhylomeDB" id="Q9GQF1"/>
<dbReference type="Reactome" id="R-DME-525793">
    <property type="pathway name" value="Myogenesis"/>
</dbReference>
<dbReference type="BioGRID-ORCS" id="43905">
    <property type="hits" value="0 hits in 3 CRISPR screens"/>
</dbReference>
<dbReference type="ChiTaRS" id="Sdc">
    <property type="organism name" value="fly"/>
</dbReference>
<dbReference type="GenomeRNAi" id="43905"/>
<dbReference type="PRO" id="PR:Q9GQF1"/>
<dbReference type="Proteomes" id="UP000000803">
    <property type="component" value="Chromosome 3L"/>
</dbReference>
<dbReference type="Bgee" id="FBgn0024187">
    <property type="expression patterns" value="Expressed in midgut large flat cell (Drosophila) in digestive tract and 251 other cell types or tissues"/>
</dbReference>
<dbReference type="ExpressionAtlas" id="Q9GQF1">
    <property type="expression patterns" value="baseline and differential"/>
</dbReference>
<dbReference type="GO" id="GO:0005737">
    <property type="term" value="C:cytoplasm"/>
    <property type="evidence" value="ECO:0000318"/>
    <property type="project" value="GO_Central"/>
</dbReference>
<dbReference type="GO" id="GO:0000139">
    <property type="term" value="C:Golgi membrane"/>
    <property type="evidence" value="ECO:0000250"/>
    <property type="project" value="UniProtKB"/>
</dbReference>
<dbReference type="GO" id="GO:0016020">
    <property type="term" value="C:membrane"/>
    <property type="evidence" value="ECO:0000250"/>
    <property type="project" value="FlyBase"/>
</dbReference>
<dbReference type="GO" id="GO:0043005">
    <property type="term" value="C:neuron projection"/>
    <property type="evidence" value="ECO:0007669"/>
    <property type="project" value="GOC"/>
</dbReference>
<dbReference type="GO" id="GO:0099523">
    <property type="term" value="C:presynaptic cytosol"/>
    <property type="evidence" value="ECO:0000314"/>
    <property type="project" value="FlyBase"/>
</dbReference>
<dbReference type="GO" id="GO:0030140">
    <property type="term" value="C:trans-Golgi network transport vesicle"/>
    <property type="evidence" value="ECO:0000314"/>
    <property type="project" value="FlyBase"/>
</dbReference>
<dbReference type="GO" id="GO:0008432">
    <property type="term" value="F:JUN kinase binding"/>
    <property type="evidence" value="ECO:0000318"/>
    <property type="project" value="GO_Central"/>
</dbReference>
<dbReference type="GO" id="GO:0019894">
    <property type="term" value="F:kinesin binding"/>
    <property type="evidence" value="ECO:0000353"/>
    <property type="project" value="UniProtKB"/>
</dbReference>
<dbReference type="GO" id="GO:0005078">
    <property type="term" value="F:MAP-kinase scaffold activity"/>
    <property type="evidence" value="ECO:0000250"/>
    <property type="project" value="UniProtKB"/>
</dbReference>
<dbReference type="GO" id="GO:0030159">
    <property type="term" value="F:signaling receptor complex adaptor activity"/>
    <property type="evidence" value="ECO:0000353"/>
    <property type="project" value="FlyBase"/>
</dbReference>
<dbReference type="GO" id="GO:0008088">
    <property type="term" value="P:axo-dendritic transport"/>
    <property type="evidence" value="ECO:0000315"/>
    <property type="project" value="FlyBase"/>
</dbReference>
<dbReference type="GO" id="GO:0043066">
    <property type="term" value="P:negative regulation of apoptotic process"/>
    <property type="evidence" value="ECO:0000315"/>
    <property type="project" value="FlyBase"/>
</dbReference>
<dbReference type="GO" id="GO:0050821">
    <property type="term" value="P:protein stabilization"/>
    <property type="evidence" value="ECO:0000315"/>
    <property type="project" value="FlyBase"/>
</dbReference>
<dbReference type="GO" id="GO:0046328">
    <property type="term" value="P:regulation of JNK cascade"/>
    <property type="evidence" value="ECO:0000250"/>
    <property type="project" value="UniProtKB"/>
</dbReference>
<dbReference type="GO" id="GO:0007416">
    <property type="term" value="P:synapse assembly"/>
    <property type="evidence" value="ECO:0000316"/>
    <property type="project" value="FlyBase"/>
</dbReference>
<dbReference type="GO" id="GO:0016192">
    <property type="term" value="P:vesicle-mediated transport"/>
    <property type="evidence" value="ECO:0000270"/>
    <property type="project" value="UniProtKB"/>
</dbReference>
<dbReference type="FunFam" id="1.20.5.1000:FF:000001">
    <property type="entry name" value="C-Jun-amino-terminal kinase-interacting protein 3 isoform X2"/>
    <property type="match status" value="1"/>
</dbReference>
<dbReference type="Gene3D" id="1.20.5.1000">
    <property type="entry name" value="arf6 gtpase in complex with a specific effector, jip4"/>
    <property type="match status" value="1"/>
</dbReference>
<dbReference type="Gene3D" id="2.130.10.10">
    <property type="entry name" value="YVTN repeat-like/Quinoprotein amine dehydrogenase"/>
    <property type="match status" value="1"/>
</dbReference>
<dbReference type="InterPro" id="IPR039911">
    <property type="entry name" value="JIP3/JIP4"/>
</dbReference>
<dbReference type="InterPro" id="IPR032486">
    <property type="entry name" value="JIP_LZII"/>
</dbReference>
<dbReference type="InterPro" id="IPR011044">
    <property type="entry name" value="Quino_amine_DH_bsu"/>
</dbReference>
<dbReference type="InterPro" id="IPR034743">
    <property type="entry name" value="RH1"/>
</dbReference>
<dbReference type="InterPro" id="IPR034744">
    <property type="entry name" value="RH2"/>
</dbReference>
<dbReference type="InterPro" id="IPR015943">
    <property type="entry name" value="WD40/YVTN_repeat-like_dom_sf"/>
</dbReference>
<dbReference type="PANTHER" id="PTHR13886:SF4">
    <property type="entry name" value="JNK-INTERACTING PROTEIN 3"/>
    <property type="match status" value="1"/>
</dbReference>
<dbReference type="PANTHER" id="PTHR13886">
    <property type="entry name" value="JNK/SAPK-ASSOCIATED PROTEIN"/>
    <property type="match status" value="1"/>
</dbReference>
<dbReference type="Pfam" id="PF16471">
    <property type="entry name" value="JIP_LZII"/>
    <property type="match status" value="1"/>
</dbReference>
<dbReference type="Pfam" id="PF09744">
    <property type="entry name" value="RH1"/>
    <property type="match status" value="1"/>
</dbReference>
<dbReference type="Pfam" id="PF19056">
    <property type="entry name" value="WD40_2"/>
    <property type="match status" value="1"/>
</dbReference>
<dbReference type="SUPFAM" id="SSF50969">
    <property type="entry name" value="YVTN repeat-like/Quinoprotein amine dehydrogenase"/>
    <property type="match status" value="1"/>
</dbReference>
<dbReference type="PROSITE" id="PS51776">
    <property type="entry name" value="RH1"/>
    <property type="match status" value="1"/>
</dbReference>
<dbReference type="PROSITE" id="PS51777">
    <property type="entry name" value="RH2"/>
    <property type="match status" value="1"/>
</dbReference>
<organism evidence="9">
    <name type="scientific">Drosophila melanogaster</name>
    <name type="common">Fruit fly</name>
    <dbReference type="NCBI Taxonomy" id="7227"/>
    <lineage>
        <taxon>Eukaryota</taxon>
        <taxon>Metazoa</taxon>
        <taxon>Ecdysozoa</taxon>
        <taxon>Arthropoda</taxon>
        <taxon>Hexapoda</taxon>
        <taxon>Insecta</taxon>
        <taxon>Pterygota</taxon>
        <taxon>Neoptera</taxon>
        <taxon>Endopterygota</taxon>
        <taxon>Diptera</taxon>
        <taxon>Brachycera</taxon>
        <taxon>Muscomorpha</taxon>
        <taxon>Ephydroidea</taxon>
        <taxon>Drosophilidae</taxon>
        <taxon>Drosophila</taxon>
        <taxon>Sophophora</taxon>
    </lineage>
</organism>
<keyword id="KW-0025">Alternative splicing</keyword>
<keyword id="KW-0175">Coiled coil</keyword>
<keyword id="KW-0963">Cytoplasm</keyword>
<keyword id="KW-1185">Reference proteome</keyword>
<keyword id="KW-0691">RNA editing</keyword>
<proteinExistence type="evidence at protein level"/>
<sequence length="1227" mass="136712">MMDNDDALLNNGGPQSGAETVYGTEDNNMVMSEKNEQVVSIVQQLAGSIYQEFERMINRYDEDVVKNLMPLLVNVLECLDASYRINQEQDVEVELLREDNEQLVTQYEREKSARKQSEQKLLEAEDLAEQENKELATRLESVESIVRMLELKHKNSLEHASRLEEREADLKKEYNKLHERYTELFKNHVDYMERTKMLMGSTHSQMSTASERMDVSRARLNPVARSSGPVSYGFASLENSVMLDTETICSVGSQSDDSGPPSLQNELDNLSGTLERGAATDALQQQHHATSPQSPDSSPVVPNVPTNVGRSTTKKEQRSDNNLYQELSFQDNEESEENEIVTGSWVHPGEYASSANDNYFGMGKEVENLIMENNELLATKNALNIVKDDLIVKVDELTGEVEIVREELNAMQQSRTKLRQRISELEDELKKAKEQVKQQNTEQEENDVPLAQRKRFTRVEMAMVLMERNQYKERLMELQEAVRLTEILRASRTVDNLDRKSKQSIWKYFSNLFTPSNRPTERVADGLGGGPMFRHTGGGSPAHSHGSPSRGSGGGDNRLALTSGQPPVHPASAGLANALIMPKDYAEEGSSERISARRREQYRQLRAHVQKEDGRLHAYGWSLPINKASQEANPNRHSGGVPVPVYCNPLAEASPHMKVFCAAGVNLHGGFTKNGQSLIPANSPYAPKSTLKIAEITSPTADQSMEALDRQMARVSLETLEPETQLSSFVWICTSTHAASTVSVVDANQSATVLDAFPICASHLLCIASVQGAMESDYALLEQSEVVKAGEMLQRPGEGTELLGKVEFVRVKPKSDDEQNSNEKQQQEEEEAKEATEKSNEQLPAVSAEEPLGNVEAIKIRQPLPGAPQRLSTDGNQTNNNNNSSSSSNLLFATKSLNPILETKDRDEPAMSSVGPTMWLGAQDGWLYVHSSVGRWHECLHRVLLPDAVLAIVHVEARVVVALANAQLAVFRRQTDGQWDLNSYHLVTLGDRNHSIRCLCVAGERIWAAHRNKIFIVDPVSLNIVHSLDAHPRKESQVRQMAATGAGVWVSIRLDSTLRLYNTHTFEHKQDVDIEPYVSKMLGTGKLGFSFVRITALMVSCNRLWIGTSNGVIISVPLAEVQPKSSSDPHGQMPLCCMANAQLSFHGHRDAVKFFVSVPMLQQPNLNGGLTFTNKRPDMLVMCGGEGYIDFRINDNDMENSIQLEPNQTIENRGDKSYLIVWHVSQR</sequence>
<evidence type="ECO:0000250" key="1"/>
<evidence type="ECO:0000255" key="2"/>
<evidence type="ECO:0000255" key="3">
    <source>
        <dbReference type="PROSITE-ProRule" id="PRU01112"/>
    </source>
</evidence>
<evidence type="ECO:0000255" key="4">
    <source>
        <dbReference type="PROSITE-ProRule" id="PRU01113"/>
    </source>
</evidence>
<evidence type="ECO:0000256" key="5">
    <source>
        <dbReference type="SAM" id="MobiDB-lite"/>
    </source>
</evidence>
<evidence type="ECO:0000269" key="6">
    <source>
    </source>
</evidence>
<evidence type="ECO:0000303" key="7">
    <source>
    </source>
</evidence>
<evidence type="ECO:0000305" key="8"/>
<evidence type="ECO:0000312" key="9">
    <source>
        <dbReference type="EMBL" id="AAG36930.1"/>
    </source>
</evidence>
<comment type="function">
    <text>The JNK-interacting protein (JIP) group of scaffold proteins selectively mediates JNK-signaling by aggregating specific components of the MAPK cascade to form a functional JNK signaling module. May function as a regulator of vesicle transport, through interactions with the JNK-signaling components and motor proteins. Syd is required for efficient kinesin-I mediated axonal transport.</text>
</comment>
<comment type="subunit">
    <text>Forms homo- and heterooligomeric complexes. Binds the TPR motif-containing C-terminal of kinesin light chain, Klc. Pre-assembled syd scaffolding complexes are then transported as a cargo of kinesin, to the required subcellular location.</text>
</comment>
<comment type="subcellular location">
    <subcellularLocation>
        <location evidence="1">Cytoplasm</location>
    </subcellularLocation>
</comment>
<comment type="alternative products">
    <event type="alternative splicing"/>
    <isoform>
        <id>Q9GQF1-1</id>
        <name>A</name>
        <sequence type="displayed"/>
    </isoform>
    <isoform>
        <id>Q9GQF1-2</id>
        <name>B</name>
        <sequence type="described" ref="VSP_002780"/>
    </isoform>
</comment>
<comment type="RNA editing">
    <location>
        <position position="983" evidence="6"/>
    </location>
    <text>Partially edited. Target of Adar.</text>
</comment>
<comment type="similarity">
    <text evidence="8">Belongs to the JIP scaffold family.</text>
</comment>
<comment type="sequence caution" evidence="8">
    <conflict type="erroneous initiation">
        <sequence resource="EMBL-CDS" id="AAL28296"/>
    </conflict>
</comment>
<comment type="sequence caution" evidence="8">
    <conflict type="erroneous termination">
        <sequence resource="EMBL-CDS" id="AAN71473"/>
    </conflict>
    <text>Truncated C-terminus.</text>
</comment>
<comment type="sequence caution" evidence="8">
    <conflict type="frameshift">
        <sequence resource="EMBL-CDS" id="AAN71473"/>
    </conflict>
</comment>
<comment type="sequence caution" evidence="8">
    <conflict type="frameshift">
        <sequence resource="EMBL-CDS" id="AAV36895"/>
    </conflict>
</comment>
<comment type="sequence caution" evidence="8">
    <conflict type="miscellaneous discrepancy">
        <sequence resource="EMBL-CDS" id="AAV36895"/>
    </conflict>
    <text>Intron retention.</text>
</comment>
<reference evidence="8" key="1">
    <citation type="journal article" date="2000" name="Cell">
        <title>Kinesin-dependent axonal transport is mediated by the Sunday Driver (SYD) protein.</title>
        <authorList>
            <person name="Bowman A.B."/>
            <person name="Kamal A."/>
            <person name="Ritchings B.W."/>
            <person name="Philp A.V."/>
            <person name="McGrail M."/>
            <person name="Gindhart J.G."/>
            <person name="Goldstein L.S.B."/>
        </authorList>
    </citation>
    <scope>NUCLEOTIDE SEQUENCE [MRNA] (ISOFORM A)</scope>
    <scope>INTERACTION WITH KLC</scope>
</reference>
<reference evidence="8" key="2">
    <citation type="journal article" date="2000" name="Science">
        <title>The genome sequence of Drosophila melanogaster.</title>
        <authorList>
            <person name="Adams M.D."/>
            <person name="Celniker S.E."/>
            <person name="Holt R.A."/>
            <person name="Evans C.A."/>
            <person name="Gocayne J.D."/>
            <person name="Amanatides P.G."/>
            <person name="Scherer S.E."/>
            <person name="Li P.W."/>
            <person name="Hoskins R.A."/>
            <person name="Galle R.F."/>
            <person name="George R.A."/>
            <person name="Lewis S.E."/>
            <person name="Richards S."/>
            <person name="Ashburner M."/>
            <person name="Henderson S.N."/>
            <person name="Sutton G.G."/>
            <person name="Wortman J.R."/>
            <person name="Yandell M.D."/>
            <person name="Zhang Q."/>
            <person name="Chen L.X."/>
            <person name="Brandon R.C."/>
            <person name="Rogers Y.-H.C."/>
            <person name="Blazej R.G."/>
            <person name="Champe M."/>
            <person name="Pfeiffer B.D."/>
            <person name="Wan K.H."/>
            <person name="Doyle C."/>
            <person name="Baxter E.G."/>
            <person name="Helt G."/>
            <person name="Nelson C.R."/>
            <person name="Miklos G.L.G."/>
            <person name="Abril J.F."/>
            <person name="Agbayani A."/>
            <person name="An H.-J."/>
            <person name="Andrews-Pfannkoch C."/>
            <person name="Baldwin D."/>
            <person name="Ballew R.M."/>
            <person name="Basu A."/>
            <person name="Baxendale J."/>
            <person name="Bayraktaroglu L."/>
            <person name="Beasley E.M."/>
            <person name="Beeson K.Y."/>
            <person name="Benos P.V."/>
            <person name="Berman B.P."/>
            <person name="Bhandari D."/>
            <person name="Bolshakov S."/>
            <person name="Borkova D."/>
            <person name="Botchan M.R."/>
            <person name="Bouck J."/>
            <person name="Brokstein P."/>
            <person name="Brottier P."/>
            <person name="Burtis K.C."/>
            <person name="Busam D.A."/>
            <person name="Butler H."/>
            <person name="Cadieu E."/>
            <person name="Center A."/>
            <person name="Chandra I."/>
            <person name="Cherry J.M."/>
            <person name="Cawley S."/>
            <person name="Dahlke C."/>
            <person name="Davenport L.B."/>
            <person name="Davies P."/>
            <person name="de Pablos B."/>
            <person name="Delcher A."/>
            <person name="Deng Z."/>
            <person name="Mays A.D."/>
            <person name="Dew I."/>
            <person name="Dietz S.M."/>
            <person name="Dodson K."/>
            <person name="Doup L.E."/>
            <person name="Downes M."/>
            <person name="Dugan-Rocha S."/>
            <person name="Dunkov B.C."/>
            <person name="Dunn P."/>
            <person name="Durbin K.J."/>
            <person name="Evangelista C.C."/>
            <person name="Ferraz C."/>
            <person name="Ferriera S."/>
            <person name="Fleischmann W."/>
            <person name="Fosler C."/>
            <person name="Gabrielian A.E."/>
            <person name="Garg N.S."/>
            <person name="Gelbart W.M."/>
            <person name="Glasser K."/>
            <person name="Glodek A."/>
            <person name="Gong F."/>
            <person name="Gorrell J.H."/>
            <person name="Gu Z."/>
            <person name="Guan P."/>
            <person name="Harris M."/>
            <person name="Harris N.L."/>
            <person name="Harvey D.A."/>
            <person name="Heiman T.J."/>
            <person name="Hernandez J.R."/>
            <person name="Houck J."/>
            <person name="Hostin D."/>
            <person name="Houston K.A."/>
            <person name="Howland T.J."/>
            <person name="Wei M.-H."/>
            <person name="Ibegwam C."/>
            <person name="Jalali M."/>
            <person name="Kalush F."/>
            <person name="Karpen G.H."/>
            <person name="Ke Z."/>
            <person name="Kennison J.A."/>
            <person name="Ketchum K.A."/>
            <person name="Kimmel B.E."/>
            <person name="Kodira C.D."/>
            <person name="Kraft C.L."/>
            <person name="Kravitz S."/>
            <person name="Kulp D."/>
            <person name="Lai Z."/>
            <person name="Lasko P."/>
            <person name="Lei Y."/>
            <person name="Levitsky A.A."/>
            <person name="Li J.H."/>
            <person name="Li Z."/>
            <person name="Liang Y."/>
            <person name="Lin X."/>
            <person name="Liu X."/>
            <person name="Mattei B."/>
            <person name="McIntosh T.C."/>
            <person name="McLeod M.P."/>
            <person name="McPherson D."/>
            <person name="Merkulov G."/>
            <person name="Milshina N.V."/>
            <person name="Mobarry C."/>
            <person name="Morris J."/>
            <person name="Moshrefi A."/>
            <person name="Mount S.M."/>
            <person name="Moy M."/>
            <person name="Murphy B."/>
            <person name="Murphy L."/>
            <person name="Muzny D.M."/>
            <person name="Nelson D.L."/>
            <person name="Nelson D.R."/>
            <person name="Nelson K.A."/>
            <person name="Nixon K."/>
            <person name="Nusskern D.R."/>
            <person name="Pacleb J.M."/>
            <person name="Palazzolo M."/>
            <person name="Pittman G.S."/>
            <person name="Pan S."/>
            <person name="Pollard J."/>
            <person name="Puri V."/>
            <person name="Reese M.G."/>
            <person name="Reinert K."/>
            <person name="Remington K."/>
            <person name="Saunders R.D.C."/>
            <person name="Scheeler F."/>
            <person name="Shen H."/>
            <person name="Shue B.C."/>
            <person name="Siden-Kiamos I."/>
            <person name="Simpson M."/>
            <person name="Skupski M.P."/>
            <person name="Smith T.J."/>
            <person name="Spier E."/>
            <person name="Spradling A.C."/>
            <person name="Stapleton M."/>
            <person name="Strong R."/>
            <person name="Sun E."/>
            <person name="Svirskas R."/>
            <person name="Tector C."/>
            <person name="Turner R."/>
            <person name="Venter E."/>
            <person name="Wang A.H."/>
            <person name="Wang X."/>
            <person name="Wang Z.-Y."/>
            <person name="Wassarman D.A."/>
            <person name="Weinstock G.M."/>
            <person name="Weissenbach J."/>
            <person name="Williams S.M."/>
            <person name="Woodage T."/>
            <person name="Worley K.C."/>
            <person name="Wu D."/>
            <person name="Yang S."/>
            <person name="Yao Q.A."/>
            <person name="Ye J."/>
            <person name="Yeh R.-F."/>
            <person name="Zaveri J.S."/>
            <person name="Zhan M."/>
            <person name="Zhang G."/>
            <person name="Zhao Q."/>
            <person name="Zheng L."/>
            <person name="Zheng X.H."/>
            <person name="Zhong F.N."/>
            <person name="Zhong W."/>
            <person name="Zhou X."/>
            <person name="Zhu S.C."/>
            <person name="Zhu X."/>
            <person name="Smith H.O."/>
            <person name="Gibbs R.A."/>
            <person name="Myers E.W."/>
            <person name="Rubin G.M."/>
            <person name="Venter J.C."/>
        </authorList>
    </citation>
    <scope>NUCLEOTIDE SEQUENCE [LARGE SCALE GENOMIC DNA]</scope>
    <source>
        <strain>Berkeley</strain>
    </source>
</reference>
<reference key="3">
    <citation type="journal article" date="2002" name="Genome Biol.">
        <title>Annotation of the Drosophila melanogaster euchromatic genome: a systematic review.</title>
        <authorList>
            <person name="Misra S."/>
            <person name="Crosby M.A."/>
            <person name="Mungall C.J."/>
            <person name="Matthews B.B."/>
            <person name="Campbell K.S."/>
            <person name="Hradecky P."/>
            <person name="Huang Y."/>
            <person name="Kaminker J.S."/>
            <person name="Millburn G.H."/>
            <person name="Prochnik S.E."/>
            <person name="Smith C.D."/>
            <person name="Tupy J.L."/>
            <person name="Whitfield E.J."/>
            <person name="Bayraktaroglu L."/>
            <person name="Berman B.P."/>
            <person name="Bettencourt B.R."/>
            <person name="Celniker S.E."/>
            <person name="de Grey A.D.N.J."/>
            <person name="Drysdale R.A."/>
            <person name="Harris N.L."/>
            <person name="Richter J."/>
            <person name="Russo S."/>
            <person name="Schroeder A.J."/>
            <person name="Shu S.Q."/>
            <person name="Stapleton M."/>
            <person name="Yamada C."/>
            <person name="Ashburner M."/>
            <person name="Gelbart W.M."/>
            <person name="Rubin G.M."/>
            <person name="Lewis S.E."/>
        </authorList>
    </citation>
    <scope>GENOME REANNOTATION</scope>
    <scope>ALTERNATIVE SPLICING</scope>
    <source>
        <strain>Berkeley</strain>
    </source>
</reference>
<reference key="4">
    <citation type="journal article" date="2002" name="Genome Biol.">
        <title>A Drosophila full-length cDNA resource.</title>
        <authorList>
            <person name="Stapleton M."/>
            <person name="Carlson J.W."/>
            <person name="Brokstein P."/>
            <person name="Yu C."/>
            <person name="Champe M."/>
            <person name="George R.A."/>
            <person name="Guarin H."/>
            <person name="Kronmiller B."/>
            <person name="Pacleb J.M."/>
            <person name="Park S."/>
            <person name="Wan K.H."/>
            <person name="Rubin G.M."/>
            <person name="Celniker S.E."/>
        </authorList>
    </citation>
    <scope>NUCLEOTIDE SEQUENCE [LARGE SCALE MRNA] (ISOFORM B)</scope>
    <scope>NUCLEOTIDE SEQUENCE [LARGE SCALE MRNA] OF 937-1227</scope>
    <source>
        <strain>Berkeley</strain>
        <tissue>Embryo</tissue>
        <tissue>Head</tissue>
    </source>
</reference>
<reference evidence="8" key="5">
    <citation type="submission" date="2004-10" db="EMBL/GenBank/DDBJ databases">
        <authorList>
            <person name="Stapleton M."/>
            <person name="Carlson J.W."/>
            <person name="Chavez C."/>
            <person name="Frise E."/>
            <person name="George R.A."/>
            <person name="Pacleb J.M."/>
            <person name="Park S."/>
            <person name="Wan K.H."/>
            <person name="Yu C."/>
            <person name="Rubin G.M."/>
            <person name="Celniker S.E."/>
        </authorList>
    </citation>
    <scope>NUCLEOTIDE SEQUENCE [LARGE SCALE MRNA] (ISOFORM A)</scope>
    <source>
        <strain>Berkeley</strain>
        <tissue>Embryo</tissue>
    </source>
</reference>
<reference key="6">
    <citation type="journal article" date="2006" name="RNA">
        <title>RNA editing in Drosophila melanogaster: new targets and functional consequences.</title>
        <authorList>
            <person name="Stapleton M."/>
            <person name="Carlson J.W."/>
            <person name="Celniker S.E."/>
        </authorList>
    </citation>
    <scope>RNA EDITING OF POSITION 983</scope>
</reference>